<name>FBPC_STRAW</name>
<sequence length="345" mass="36282">MLLSLKAATVRFGGRAVLDAVDLDVAEHETVCVLGPSGSGKSTLLRAVAGLQPLDEGQVVLGGRAMDSVPPHKRGVGLMFQDHQLFPQRDVGGNVAFGLRMHGASRSEQEGRVRELLDLVGLPGAARRAVASLSGGEQQRVALARALAPRPRLLMLDEPLGQLDRSLRERLVVELRELFTELGTTVLAVTHDQGEAFALADRVVVMRAGRIAQSGTPLEVWRQPADEFVARFLGFDNVVGATVAGEAADTPWGKVPVPEGSPQGPGTLLVRPAGVRLADATEGLRCTVAARTFRGTHVAVHLQPEDDAPRLEAACALRDAPEPGETVGVAFDVADIVVLGGASGA</sequence>
<reference key="1">
    <citation type="journal article" date="2001" name="Proc. Natl. Acad. Sci. U.S.A.">
        <title>Genome sequence of an industrial microorganism Streptomyces avermitilis: deducing the ability of producing secondary metabolites.</title>
        <authorList>
            <person name="Omura S."/>
            <person name="Ikeda H."/>
            <person name="Ishikawa J."/>
            <person name="Hanamoto A."/>
            <person name="Takahashi C."/>
            <person name="Shinose M."/>
            <person name="Takahashi Y."/>
            <person name="Horikawa H."/>
            <person name="Nakazawa H."/>
            <person name="Osonoe T."/>
            <person name="Kikuchi H."/>
            <person name="Shiba T."/>
            <person name="Sakaki Y."/>
            <person name="Hattori M."/>
        </authorList>
    </citation>
    <scope>NUCLEOTIDE SEQUENCE [LARGE SCALE GENOMIC DNA]</scope>
    <source>
        <strain>ATCC 31267 / DSM 46492 / JCM 5070 / NBRC 14893 / NCIMB 12804 / NRRL 8165 / MA-4680</strain>
    </source>
</reference>
<reference key="2">
    <citation type="journal article" date="2003" name="Nat. Biotechnol.">
        <title>Complete genome sequence and comparative analysis of the industrial microorganism Streptomyces avermitilis.</title>
        <authorList>
            <person name="Ikeda H."/>
            <person name="Ishikawa J."/>
            <person name="Hanamoto A."/>
            <person name="Shinose M."/>
            <person name="Kikuchi H."/>
            <person name="Shiba T."/>
            <person name="Sakaki Y."/>
            <person name="Hattori M."/>
            <person name="Omura S."/>
        </authorList>
    </citation>
    <scope>NUCLEOTIDE SEQUENCE [LARGE SCALE GENOMIC DNA]</scope>
    <source>
        <strain>ATCC 31267 / DSM 46492 / JCM 5070 / NBRC 14893 / NCIMB 12804 / NRRL 8165 / MA-4680</strain>
    </source>
</reference>
<evidence type="ECO:0000255" key="1">
    <source>
        <dbReference type="HAMAP-Rule" id="MF_01706"/>
    </source>
</evidence>
<keyword id="KW-0067">ATP-binding</keyword>
<keyword id="KW-1003">Cell membrane</keyword>
<keyword id="KW-0406">Ion transport</keyword>
<keyword id="KW-0408">Iron</keyword>
<keyword id="KW-0410">Iron transport</keyword>
<keyword id="KW-0472">Membrane</keyword>
<keyword id="KW-0547">Nucleotide-binding</keyword>
<keyword id="KW-1185">Reference proteome</keyword>
<keyword id="KW-1278">Translocase</keyword>
<keyword id="KW-0813">Transport</keyword>
<protein>
    <recommendedName>
        <fullName evidence="1">Fe(3+) ions import ATP-binding protein FbpC</fullName>
        <ecNumber evidence="1">7.2.2.7</ecNumber>
    </recommendedName>
</protein>
<dbReference type="EC" id="7.2.2.7" evidence="1"/>
<dbReference type="EMBL" id="BA000030">
    <property type="protein sequence ID" value="BAC70329.1"/>
    <property type="molecule type" value="Genomic_DNA"/>
</dbReference>
<dbReference type="RefSeq" id="WP_010984054.1">
    <property type="nucleotide sequence ID" value="NZ_JZJK01000071.1"/>
</dbReference>
<dbReference type="SMR" id="Q82JY6"/>
<dbReference type="GeneID" id="41539700"/>
<dbReference type="KEGG" id="sma:SAVERM_2618"/>
<dbReference type="eggNOG" id="COG3842">
    <property type="taxonomic scope" value="Bacteria"/>
</dbReference>
<dbReference type="HOGENOM" id="CLU_000604_1_1_11"/>
<dbReference type="OrthoDB" id="9802264at2"/>
<dbReference type="Proteomes" id="UP000000428">
    <property type="component" value="Chromosome"/>
</dbReference>
<dbReference type="GO" id="GO:0043190">
    <property type="term" value="C:ATP-binding cassette (ABC) transporter complex"/>
    <property type="evidence" value="ECO:0007669"/>
    <property type="project" value="InterPro"/>
</dbReference>
<dbReference type="GO" id="GO:0015408">
    <property type="term" value="F:ABC-type ferric iron transporter activity"/>
    <property type="evidence" value="ECO:0007669"/>
    <property type="project" value="UniProtKB-EC"/>
</dbReference>
<dbReference type="GO" id="GO:0005524">
    <property type="term" value="F:ATP binding"/>
    <property type="evidence" value="ECO:0007669"/>
    <property type="project" value="UniProtKB-KW"/>
</dbReference>
<dbReference type="GO" id="GO:0016887">
    <property type="term" value="F:ATP hydrolysis activity"/>
    <property type="evidence" value="ECO:0007669"/>
    <property type="project" value="InterPro"/>
</dbReference>
<dbReference type="FunFam" id="3.40.50.300:FF:000425">
    <property type="entry name" value="Probable ABC transporter, ATP-binding subunit"/>
    <property type="match status" value="1"/>
</dbReference>
<dbReference type="Gene3D" id="3.40.50.300">
    <property type="entry name" value="P-loop containing nucleotide triphosphate hydrolases"/>
    <property type="match status" value="1"/>
</dbReference>
<dbReference type="InterPro" id="IPR003593">
    <property type="entry name" value="AAA+_ATPase"/>
</dbReference>
<dbReference type="InterPro" id="IPR050093">
    <property type="entry name" value="ABC_SmlMolc_Importer"/>
</dbReference>
<dbReference type="InterPro" id="IPR003439">
    <property type="entry name" value="ABC_transporter-like_ATP-bd"/>
</dbReference>
<dbReference type="InterPro" id="IPR017871">
    <property type="entry name" value="ABC_transporter-like_CS"/>
</dbReference>
<dbReference type="InterPro" id="IPR008995">
    <property type="entry name" value="Mo/tungstate-bd_C_term_dom"/>
</dbReference>
<dbReference type="InterPro" id="IPR027417">
    <property type="entry name" value="P-loop_NTPase"/>
</dbReference>
<dbReference type="InterPro" id="IPR013611">
    <property type="entry name" value="Transp-assoc_OB_typ2"/>
</dbReference>
<dbReference type="PANTHER" id="PTHR42781">
    <property type="entry name" value="SPERMIDINE/PUTRESCINE IMPORT ATP-BINDING PROTEIN POTA"/>
    <property type="match status" value="1"/>
</dbReference>
<dbReference type="PANTHER" id="PTHR42781:SF4">
    <property type="entry name" value="SPERMIDINE_PUTRESCINE IMPORT ATP-BINDING PROTEIN POTA"/>
    <property type="match status" value="1"/>
</dbReference>
<dbReference type="Pfam" id="PF00005">
    <property type="entry name" value="ABC_tran"/>
    <property type="match status" value="1"/>
</dbReference>
<dbReference type="Pfam" id="PF08402">
    <property type="entry name" value="TOBE_2"/>
    <property type="match status" value="1"/>
</dbReference>
<dbReference type="SMART" id="SM00382">
    <property type="entry name" value="AAA"/>
    <property type="match status" value="1"/>
</dbReference>
<dbReference type="SUPFAM" id="SSF50331">
    <property type="entry name" value="MOP-like"/>
    <property type="match status" value="1"/>
</dbReference>
<dbReference type="SUPFAM" id="SSF52540">
    <property type="entry name" value="P-loop containing nucleoside triphosphate hydrolases"/>
    <property type="match status" value="1"/>
</dbReference>
<dbReference type="PROSITE" id="PS00211">
    <property type="entry name" value="ABC_TRANSPORTER_1"/>
    <property type="match status" value="1"/>
</dbReference>
<dbReference type="PROSITE" id="PS50893">
    <property type="entry name" value="ABC_TRANSPORTER_2"/>
    <property type="match status" value="1"/>
</dbReference>
<dbReference type="PROSITE" id="PS51242">
    <property type="entry name" value="FBPC"/>
    <property type="match status" value="1"/>
</dbReference>
<accession>Q82JY6</accession>
<gene>
    <name evidence="1" type="primary">fbpC</name>
    <name type="ordered locus">SAV_2618</name>
</gene>
<organism>
    <name type="scientific">Streptomyces avermitilis (strain ATCC 31267 / DSM 46492 / JCM 5070 / NBRC 14893 / NCIMB 12804 / NRRL 8165 / MA-4680)</name>
    <dbReference type="NCBI Taxonomy" id="227882"/>
    <lineage>
        <taxon>Bacteria</taxon>
        <taxon>Bacillati</taxon>
        <taxon>Actinomycetota</taxon>
        <taxon>Actinomycetes</taxon>
        <taxon>Kitasatosporales</taxon>
        <taxon>Streptomycetaceae</taxon>
        <taxon>Streptomyces</taxon>
    </lineage>
</organism>
<proteinExistence type="inferred from homology"/>
<feature type="chain" id="PRO_0000092365" description="Fe(3+) ions import ATP-binding protein FbpC">
    <location>
        <begin position="1"/>
        <end position="345"/>
    </location>
</feature>
<feature type="domain" description="ABC transporter" evidence="1">
    <location>
        <begin position="3"/>
        <end position="233"/>
    </location>
</feature>
<feature type="binding site" evidence="1">
    <location>
        <begin position="35"/>
        <end position="42"/>
    </location>
    <ligand>
        <name>ATP</name>
        <dbReference type="ChEBI" id="CHEBI:30616"/>
    </ligand>
</feature>
<comment type="function">
    <text evidence="1">Part of the ABC transporter complex FbpABC involved in Fe(3+) ions import. Responsible for energy coupling to the transport system.</text>
</comment>
<comment type="catalytic activity">
    <reaction evidence="1">
        <text>Fe(3+)(out) + ATP + H2O = Fe(3+)(in) + ADP + phosphate + H(+)</text>
        <dbReference type="Rhea" id="RHEA:12332"/>
        <dbReference type="ChEBI" id="CHEBI:15377"/>
        <dbReference type="ChEBI" id="CHEBI:15378"/>
        <dbReference type="ChEBI" id="CHEBI:29034"/>
        <dbReference type="ChEBI" id="CHEBI:30616"/>
        <dbReference type="ChEBI" id="CHEBI:43474"/>
        <dbReference type="ChEBI" id="CHEBI:456216"/>
        <dbReference type="EC" id="7.2.2.7"/>
    </reaction>
</comment>
<comment type="subunit">
    <text evidence="1">The complex is composed of two ATP-binding proteins (FbpC), two transmembrane proteins (FbpB) and a solute-binding protein (FbpA).</text>
</comment>
<comment type="subcellular location">
    <subcellularLocation>
        <location evidence="1">Cell membrane</location>
        <topology evidence="1">Peripheral membrane protein</topology>
    </subcellularLocation>
</comment>
<comment type="similarity">
    <text evidence="1">Belongs to the ABC transporter superfamily. Fe(3+) ion importer (TC 3.A.1.10) family.</text>
</comment>